<sequence>MNAEKSPVNHNVDHKEIAKFEAVASRWWDLEGEFKPLHRINPLRLGYIAERAGGLFGKKVLDVGCGGGILAESMAREGATVTGLDMGFEPLQVAKLHALESGIQVDYVQETVEEHAAKHAGQYDVVTCMEMLEHVPDPQSVVRACAQLVKPGGDVFFSTLNRNGKSWLMAVVGAEYILRMVPKGTHDVKKFIKPAELLGWVDQTSLKERHMTGLHYNPITNTFKLGPGVDVNYMLHTQNK</sequence>
<organism>
    <name type="scientific">Escherichia coli O6:K15:H31 (strain 536 / UPEC)</name>
    <dbReference type="NCBI Taxonomy" id="362663"/>
    <lineage>
        <taxon>Bacteria</taxon>
        <taxon>Pseudomonadati</taxon>
        <taxon>Pseudomonadota</taxon>
        <taxon>Gammaproteobacteria</taxon>
        <taxon>Enterobacterales</taxon>
        <taxon>Enterobacteriaceae</taxon>
        <taxon>Escherichia</taxon>
    </lineage>
</organism>
<accession>Q0TFL0</accession>
<comment type="function">
    <text evidence="1">O-methyltransferase that catalyzes the 2 O-methylation steps in the ubiquinone biosynthetic pathway.</text>
</comment>
<comment type="catalytic activity">
    <reaction evidence="1">
        <text>a 3-demethylubiquinol + S-adenosyl-L-methionine = a ubiquinol + S-adenosyl-L-homocysteine + H(+)</text>
        <dbReference type="Rhea" id="RHEA:44380"/>
        <dbReference type="Rhea" id="RHEA-COMP:9566"/>
        <dbReference type="Rhea" id="RHEA-COMP:10914"/>
        <dbReference type="ChEBI" id="CHEBI:15378"/>
        <dbReference type="ChEBI" id="CHEBI:17976"/>
        <dbReference type="ChEBI" id="CHEBI:57856"/>
        <dbReference type="ChEBI" id="CHEBI:59789"/>
        <dbReference type="ChEBI" id="CHEBI:84422"/>
        <dbReference type="EC" id="2.1.1.64"/>
    </reaction>
</comment>
<comment type="catalytic activity">
    <reaction evidence="1">
        <text>a 3-(all-trans-polyprenyl)benzene-1,2-diol + S-adenosyl-L-methionine = a 2-methoxy-6-(all-trans-polyprenyl)phenol + S-adenosyl-L-homocysteine + H(+)</text>
        <dbReference type="Rhea" id="RHEA:31411"/>
        <dbReference type="Rhea" id="RHEA-COMP:9550"/>
        <dbReference type="Rhea" id="RHEA-COMP:9551"/>
        <dbReference type="ChEBI" id="CHEBI:15378"/>
        <dbReference type="ChEBI" id="CHEBI:57856"/>
        <dbReference type="ChEBI" id="CHEBI:59789"/>
        <dbReference type="ChEBI" id="CHEBI:62729"/>
        <dbReference type="ChEBI" id="CHEBI:62731"/>
        <dbReference type="EC" id="2.1.1.222"/>
    </reaction>
</comment>
<comment type="pathway">
    <text evidence="1">Cofactor biosynthesis; ubiquinone biosynthesis.</text>
</comment>
<comment type="similarity">
    <text evidence="1">Belongs to the methyltransferase superfamily. UbiG/COQ3 family.</text>
</comment>
<proteinExistence type="inferred from homology"/>
<name>UBIG_ECOL5</name>
<keyword id="KW-0489">Methyltransferase</keyword>
<keyword id="KW-0949">S-adenosyl-L-methionine</keyword>
<keyword id="KW-0808">Transferase</keyword>
<keyword id="KW-0831">Ubiquinone biosynthesis</keyword>
<feature type="chain" id="PRO_1000013899" description="Ubiquinone biosynthesis O-methyltransferase">
    <location>
        <begin position="1"/>
        <end position="240"/>
    </location>
</feature>
<feature type="binding site" evidence="1">
    <location>
        <position position="44"/>
    </location>
    <ligand>
        <name>S-adenosyl-L-methionine</name>
        <dbReference type="ChEBI" id="CHEBI:59789"/>
    </ligand>
</feature>
<feature type="binding site" evidence="1">
    <location>
        <position position="64"/>
    </location>
    <ligand>
        <name>S-adenosyl-L-methionine</name>
        <dbReference type="ChEBI" id="CHEBI:59789"/>
    </ligand>
</feature>
<feature type="binding site" evidence="1">
    <location>
        <position position="85"/>
    </location>
    <ligand>
        <name>S-adenosyl-L-methionine</name>
        <dbReference type="ChEBI" id="CHEBI:59789"/>
    </ligand>
</feature>
<feature type="binding site" evidence="1">
    <location>
        <position position="129"/>
    </location>
    <ligand>
        <name>S-adenosyl-L-methionine</name>
        <dbReference type="ChEBI" id="CHEBI:59789"/>
    </ligand>
</feature>
<reference key="1">
    <citation type="journal article" date="2006" name="Mol. Microbiol.">
        <title>Role of pathogenicity island-associated integrases in the genome plasticity of uropathogenic Escherichia coli strain 536.</title>
        <authorList>
            <person name="Hochhut B."/>
            <person name="Wilde C."/>
            <person name="Balling G."/>
            <person name="Middendorf B."/>
            <person name="Dobrindt U."/>
            <person name="Brzuszkiewicz E."/>
            <person name="Gottschalk G."/>
            <person name="Carniel E."/>
            <person name="Hacker J."/>
        </authorList>
    </citation>
    <scope>NUCLEOTIDE SEQUENCE [LARGE SCALE GENOMIC DNA]</scope>
    <source>
        <strain>536 / UPEC</strain>
    </source>
</reference>
<protein>
    <recommendedName>
        <fullName evidence="1">Ubiquinone biosynthesis O-methyltransferase</fullName>
    </recommendedName>
    <alternativeName>
        <fullName evidence="1">2-octaprenyl-6-hydroxyphenol methylase</fullName>
        <ecNumber evidence="1">2.1.1.222</ecNumber>
    </alternativeName>
    <alternativeName>
        <fullName evidence="1">3-demethylubiquinone-8 3-O-methyltransferase</fullName>
        <ecNumber evidence="1">2.1.1.64</ecNumber>
    </alternativeName>
</protein>
<evidence type="ECO:0000255" key="1">
    <source>
        <dbReference type="HAMAP-Rule" id="MF_00472"/>
    </source>
</evidence>
<gene>
    <name evidence="1" type="primary">ubiG</name>
    <name type="ordered locus">ECP_2275</name>
</gene>
<dbReference type="EC" id="2.1.1.222" evidence="1"/>
<dbReference type="EC" id="2.1.1.64" evidence="1"/>
<dbReference type="EMBL" id="CP000247">
    <property type="protein sequence ID" value="ABG70269.1"/>
    <property type="molecule type" value="Genomic_DNA"/>
</dbReference>
<dbReference type="RefSeq" id="WP_000990783.1">
    <property type="nucleotide sequence ID" value="NC_008253.1"/>
</dbReference>
<dbReference type="SMR" id="Q0TFL0"/>
<dbReference type="KEGG" id="ecp:ECP_2275"/>
<dbReference type="HOGENOM" id="CLU_042432_5_0_6"/>
<dbReference type="UniPathway" id="UPA00232"/>
<dbReference type="Proteomes" id="UP000009182">
    <property type="component" value="Chromosome"/>
</dbReference>
<dbReference type="GO" id="GO:0102208">
    <property type="term" value="F:2-polyprenyl-6-hydroxyphenol methylase activity"/>
    <property type="evidence" value="ECO:0007669"/>
    <property type="project" value="UniProtKB-EC"/>
</dbReference>
<dbReference type="GO" id="GO:0061542">
    <property type="term" value="F:3-demethylubiquinol 3-O-methyltransferase activity"/>
    <property type="evidence" value="ECO:0007669"/>
    <property type="project" value="UniProtKB-UniRule"/>
</dbReference>
<dbReference type="GO" id="GO:0010420">
    <property type="term" value="F:polyprenyldihydroxybenzoate methyltransferase activity"/>
    <property type="evidence" value="ECO:0007669"/>
    <property type="project" value="InterPro"/>
</dbReference>
<dbReference type="GO" id="GO:0032259">
    <property type="term" value="P:methylation"/>
    <property type="evidence" value="ECO:0007669"/>
    <property type="project" value="UniProtKB-KW"/>
</dbReference>
<dbReference type="CDD" id="cd02440">
    <property type="entry name" value="AdoMet_MTases"/>
    <property type="match status" value="1"/>
</dbReference>
<dbReference type="FunFam" id="3.40.50.150:FF:000028">
    <property type="entry name" value="Ubiquinone biosynthesis O-methyltransferase"/>
    <property type="match status" value="1"/>
</dbReference>
<dbReference type="Gene3D" id="3.40.50.150">
    <property type="entry name" value="Vaccinia Virus protein VP39"/>
    <property type="match status" value="1"/>
</dbReference>
<dbReference type="HAMAP" id="MF_00472">
    <property type="entry name" value="UbiG"/>
    <property type="match status" value="1"/>
</dbReference>
<dbReference type="InterPro" id="IPR029063">
    <property type="entry name" value="SAM-dependent_MTases_sf"/>
</dbReference>
<dbReference type="InterPro" id="IPR010233">
    <property type="entry name" value="UbiG_MeTrfase"/>
</dbReference>
<dbReference type="NCBIfam" id="TIGR01983">
    <property type="entry name" value="UbiG"/>
    <property type="match status" value="1"/>
</dbReference>
<dbReference type="PANTHER" id="PTHR43464">
    <property type="entry name" value="METHYLTRANSFERASE"/>
    <property type="match status" value="1"/>
</dbReference>
<dbReference type="PANTHER" id="PTHR43464:SF19">
    <property type="entry name" value="UBIQUINONE BIOSYNTHESIS O-METHYLTRANSFERASE, MITOCHONDRIAL"/>
    <property type="match status" value="1"/>
</dbReference>
<dbReference type="Pfam" id="PF13489">
    <property type="entry name" value="Methyltransf_23"/>
    <property type="match status" value="1"/>
</dbReference>
<dbReference type="SUPFAM" id="SSF53335">
    <property type="entry name" value="S-adenosyl-L-methionine-dependent methyltransferases"/>
    <property type="match status" value="1"/>
</dbReference>